<feature type="chain" id="PRO_0000240137" description="Large ribosomal subunit protein eL14">
    <location>
        <begin position="1"/>
        <end position="214"/>
    </location>
</feature>
<feature type="repeat" description="1-1; approximate">
    <location>
        <begin position="170"/>
        <end position="174"/>
    </location>
</feature>
<feature type="repeat" description="1-2">
    <location>
        <begin position="175"/>
        <end position="179"/>
    </location>
</feature>
<feature type="repeat" description="1-3">
    <location>
        <begin position="180"/>
        <end position="184"/>
    </location>
</feature>
<feature type="repeat" description="1-4">
    <location>
        <begin position="185"/>
        <end position="189"/>
    </location>
</feature>
<feature type="repeat" description="2-1">
    <location>
        <begin position="192"/>
        <end position="194"/>
    </location>
</feature>
<feature type="repeat" description="2-2">
    <location>
        <begin position="195"/>
        <end position="197"/>
    </location>
</feature>
<feature type="region of interest" description="Disordered" evidence="3">
    <location>
        <begin position="161"/>
        <end position="214"/>
    </location>
</feature>
<feature type="region of interest" description="4 X 5 AA tandem repeats of Q-K-A-[APS]-X">
    <location>
        <begin position="170"/>
        <end position="189"/>
    </location>
</feature>
<feature type="region of interest" description="2 X 3 AA tandem repeats of K-G-Q">
    <location>
        <begin position="192"/>
        <end position="197"/>
    </location>
</feature>
<feature type="compositionally biased region" description="Low complexity" evidence="3">
    <location>
        <begin position="172"/>
        <end position="214"/>
    </location>
</feature>
<feature type="modified residue" description="N6-acetyllysine" evidence="1">
    <location>
        <position position="79"/>
    </location>
</feature>
<feature type="modified residue" description="N6-acetyllysine; alternate" evidence="1">
    <location>
        <position position="85"/>
    </location>
</feature>
<feature type="modified residue" description="N6-succinyllysine; alternate" evidence="2">
    <location>
        <position position="85"/>
    </location>
</feature>
<feature type="modified residue" description="Phosphoserine" evidence="1">
    <location>
        <position position="139"/>
    </location>
</feature>
<feature type="modified residue" description="N6-succinyllysine" evidence="2">
    <location>
        <position position="203"/>
    </location>
</feature>
<feature type="cross-link" description="Glycyl lysine isopeptide (Lys-Gly) (interchain with G-Cter in SUMO2)" evidence="1">
    <location>
        <position position="124"/>
    </location>
</feature>
<name>RL14_BOVIN</name>
<comment type="function">
    <text evidence="1">Component of the large ribosomal subunit. The ribosome is a large ribonucleoprotein complex responsible for the synthesis of proteins in the cell.</text>
</comment>
<comment type="subunit">
    <text evidence="1">Component of the large ribosomal subunit.</text>
</comment>
<comment type="subcellular location">
    <subcellularLocation>
        <location evidence="1">Cytoplasm</location>
    </subcellularLocation>
</comment>
<comment type="similarity">
    <text evidence="4">Belongs to the eukaryotic ribosomal protein eL14 family.</text>
</comment>
<proteinExistence type="evidence at transcript level"/>
<protein>
    <recommendedName>
        <fullName evidence="4">Large ribosomal subunit protein eL14</fullName>
    </recommendedName>
    <alternativeName>
        <fullName>60S ribosomal protein L14</fullName>
    </alternativeName>
</protein>
<sequence length="214" mass="23436">MVFRRFVEVGRVAYVSFGPHAGKLVAIVDVIDQNRALVDGPCTQVRRQAMPFKCMQLTDFILKFPHSARQKYVRKAWEKADINAKWAATRWAKKIEAREKKAKMTDFDRYKVMKARKMRNRLIKIEVKKLQKAALLKASPKKALAAKGAAAVAAAAAAKVPAKKITTEGKKAPAQKAPAQKAAGQKAAPPPKTQKGQKAPSQKAPAPKASGKKA</sequence>
<keyword id="KW-0007">Acetylation</keyword>
<keyword id="KW-0963">Cytoplasm</keyword>
<keyword id="KW-1017">Isopeptide bond</keyword>
<keyword id="KW-0597">Phosphoprotein</keyword>
<keyword id="KW-1185">Reference proteome</keyword>
<keyword id="KW-0677">Repeat</keyword>
<keyword id="KW-0687">Ribonucleoprotein</keyword>
<keyword id="KW-0689">Ribosomal protein</keyword>
<keyword id="KW-0832">Ubl conjugation</keyword>
<gene>
    <name type="primary">RPL14</name>
</gene>
<reference key="1">
    <citation type="submission" date="2007-06" db="EMBL/GenBank/DDBJ databases">
        <authorList>
            <consortium name="NIH - Mammalian Gene Collection (MGC) project"/>
        </authorList>
    </citation>
    <scope>NUCLEOTIDE SEQUENCE [LARGE SCALE MRNA]</scope>
    <source>
        <strain>Crossbred X Angus</strain>
        <tissue>Ileum</tissue>
    </source>
</reference>
<organism>
    <name type="scientific">Bos taurus</name>
    <name type="common">Bovine</name>
    <dbReference type="NCBI Taxonomy" id="9913"/>
    <lineage>
        <taxon>Eukaryota</taxon>
        <taxon>Metazoa</taxon>
        <taxon>Chordata</taxon>
        <taxon>Craniata</taxon>
        <taxon>Vertebrata</taxon>
        <taxon>Euteleostomi</taxon>
        <taxon>Mammalia</taxon>
        <taxon>Eutheria</taxon>
        <taxon>Laurasiatheria</taxon>
        <taxon>Artiodactyla</taxon>
        <taxon>Ruminantia</taxon>
        <taxon>Pecora</taxon>
        <taxon>Bovidae</taxon>
        <taxon>Bovinae</taxon>
        <taxon>Bos</taxon>
    </lineage>
</organism>
<evidence type="ECO:0000250" key="1">
    <source>
        <dbReference type="UniProtKB" id="P50914"/>
    </source>
</evidence>
<evidence type="ECO:0000250" key="2">
    <source>
        <dbReference type="UniProtKB" id="Q9CR57"/>
    </source>
</evidence>
<evidence type="ECO:0000256" key="3">
    <source>
        <dbReference type="SAM" id="MobiDB-lite"/>
    </source>
</evidence>
<evidence type="ECO:0000305" key="4"/>
<dbReference type="EMBL" id="BC102261">
    <property type="protein sequence ID" value="AAI02262.1"/>
    <property type="molecule type" value="mRNA"/>
</dbReference>
<dbReference type="EMBL" id="BC148013">
    <property type="protein sequence ID" value="AAI48014.1"/>
    <property type="molecule type" value="mRNA"/>
</dbReference>
<dbReference type="RefSeq" id="NP_001029846.1">
    <property type="nucleotide sequence ID" value="NM_001034674.1"/>
</dbReference>
<dbReference type="SMR" id="Q3T0U2"/>
<dbReference type="FunCoup" id="Q3T0U2">
    <property type="interactions" value="2274"/>
</dbReference>
<dbReference type="STRING" id="9913.ENSBTAP00000002642"/>
<dbReference type="iPTMnet" id="Q3T0U2"/>
<dbReference type="PaxDb" id="9913-ENSBTAP00000002642"/>
<dbReference type="PeptideAtlas" id="Q3T0U2"/>
<dbReference type="GeneID" id="539373"/>
<dbReference type="KEGG" id="bta:539373"/>
<dbReference type="CTD" id="9045"/>
<dbReference type="eggNOG" id="KOG3421">
    <property type="taxonomic scope" value="Eukaryota"/>
</dbReference>
<dbReference type="HOGENOM" id="CLU_082438_0_0_1"/>
<dbReference type="InParanoid" id="Q3T0U2"/>
<dbReference type="OrthoDB" id="1875589at2759"/>
<dbReference type="CD-CODE" id="D7FE2080">
    <property type="entry name" value="Nucleolus"/>
</dbReference>
<dbReference type="Proteomes" id="UP000009136">
    <property type="component" value="Unplaced"/>
</dbReference>
<dbReference type="GO" id="GO:0022625">
    <property type="term" value="C:cytosolic large ribosomal subunit"/>
    <property type="evidence" value="ECO:0000318"/>
    <property type="project" value="GO_Central"/>
</dbReference>
<dbReference type="GO" id="GO:0043231">
    <property type="term" value="C:intracellular membrane-bounded organelle"/>
    <property type="evidence" value="ECO:0007669"/>
    <property type="project" value="UniProtKB-ARBA"/>
</dbReference>
<dbReference type="GO" id="GO:0031090">
    <property type="term" value="C:organelle membrane"/>
    <property type="evidence" value="ECO:0007669"/>
    <property type="project" value="UniProtKB-ARBA"/>
</dbReference>
<dbReference type="GO" id="GO:0003723">
    <property type="term" value="F:RNA binding"/>
    <property type="evidence" value="ECO:0000318"/>
    <property type="project" value="GO_Central"/>
</dbReference>
<dbReference type="GO" id="GO:0003735">
    <property type="term" value="F:structural constituent of ribosome"/>
    <property type="evidence" value="ECO:0000318"/>
    <property type="project" value="GO_Central"/>
</dbReference>
<dbReference type="GO" id="GO:0042273">
    <property type="term" value="P:ribosomal large subunit biogenesis"/>
    <property type="evidence" value="ECO:0000318"/>
    <property type="project" value="GO_Central"/>
</dbReference>
<dbReference type="GO" id="GO:0006412">
    <property type="term" value="P:translation"/>
    <property type="evidence" value="ECO:0007669"/>
    <property type="project" value="InterPro"/>
</dbReference>
<dbReference type="CDD" id="cd23702">
    <property type="entry name" value="eL14"/>
    <property type="match status" value="1"/>
</dbReference>
<dbReference type="FunFam" id="2.30.30.30:FF:000022">
    <property type="entry name" value="60S ribosomal protein L14"/>
    <property type="match status" value="1"/>
</dbReference>
<dbReference type="Gene3D" id="2.30.30.30">
    <property type="match status" value="1"/>
</dbReference>
<dbReference type="Gene3D" id="6.10.250.2270">
    <property type="match status" value="1"/>
</dbReference>
<dbReference type="InterPro" id="IPR014722">
    <property type="entry name" value="Rib_uL2_dom2"/>
</dbReference>
<dbReference type="InterPro" id="IPR039660">
    <property type="entry name" value="Ribosomal_eL14"/>
</dbReference>
<dbReference type="InterPro" id="IPR002784">
    <property type="entry name" value="Ribosomal_eL14_dom"/>
</dbReference>
<dbReference type="InterPro" id="IPR008991">
    <property type="entry name" value="Translation_prot_SH3-like_sf"/>
</dbReference>
<dbReference type="PANTHER" id="PTHR11127">
    <property type="entry name" value="60S RIBOSOMAL PROTEIN L14"/>
    <property type="match status" value="1"/>
</dbReference>
<dbReference type="PANTHER" id="PTHR11127:SF2">
    <property type="entry name" value="LARGE RIBOSOMAL SUBUNIT PROTEIN EL14"/>
    <property type="match status" value="1"/>
</dbReference>
<dbReference type="Pfam" id="PF01929">
    <property type="entry name" value="Ribosomal_L14e"/>
    <property type="match status" value="1"/>
</dbReference>
<dbReference type="SUPFAM" id="SSF50104">
    <property type="entry name" value="Translation proteins SH3-like domain"/>
    <property type="match status" value="1"/>
</dbReference>
<accession>Q3T0U2</accession>
<accession>A6QLM1</accession>